<organism>
    <name type="scientific">Shigella flexneri</name>
    <dbReference type="NCBI Taxonomy" id="623"/>
    <lineage>
        <taxon>Bacteria</taxon>
        <taxon>Pseudomonadati</taxon>
        <taxon>Pseudomonadota</taxon>
        <taxon>Gammaproteobacteria</taxon>
        <taxon>Enterobacterales</taxon>
        <taxon>Enterobacteriaceae</taxon>
        <taxon>Shigella</taxon>
    </lineage>
</organism>
<sequence>MRVLLAPMEGVLDSLVRELLTEVNDYDLCITEFVRVVDQLLPVKVFHRICPELQNASRTPSGTLVRVQLLGQFPQWLAENAARAVELGFWGVDLNCGCPSKTVNGSGGGATLLKDPELIYQGAKAMREAVPAHLPVSVKVRLGWDSGEKKFEIADAVQQAGATELVVHGRTKEQGYRAEHIDWQAIGEIRQRLNIPVIANGEIWDWQSAQQCMAISGCDAVMIGRGALNIPNLSRVVKYNEPRMPWPEVVALLQKYTRLEKQGDTGLYHVARIKQWLSYLRKEYDEATELFQHVRVLNNSPDIARAIQAIDIEKL</sequence>
<protein>
    <recommendedName>
        <fullName evidence="1">tRNA-dihydrouridine(16) synthase</fullName>
        <ecNumber evidence="1">1.3.1.-</ecNumber>
    </recommendedName>
    <alternativeName>
        <fullName evidence="1">U16-specific dihydrouridine synthase</fullName>
        <shortName evidence="1">U16-specific Dus</shortName>
    </alternativeName>
    <alternativeName>
        <fullName evidence="1">tRNA-dihydrouridine synthase C</fullName>
    </alternativeName>
</protein>
<name>DUSC_SHIFL</name>
<feature type="chain" id="PRO_0000162125" description="tRNA-dihydrouridine(16) synthase">
    <location>
        <begin position="1"/>
        <end position="315"/>
    </location>
</feature>
<feature type="active site" description="Proton donor" evidence="1">
    <location>
        <position position="98"/>
    </location>
</feature>
<feature type="binding site" evidence="1">
    <location>
        <begin position="7"/>
        <end position="9"/>
    </location>
    <ligand>
        <name>FMN</name>
        <dbReference type="ChEBI" id="CHEBI:58210"/>
    </ligand>
</feature>
<feature type="binding site" evidence="1">
    <location>
        <position position="68"/>
    </location>
    <ligand>
        <name>FMN</name>
        <dbReference type="ChEBI" id="CHEBI:58210"/>
    </ligand>
</feature>
<feature type="binding site" evidence="1">
    <location>
        <position position="139"/>
    </location>
    <ligand>
        <name>FMN</name>
        <dbReference type="ChEBI" id="CHEBI:58210"/>
    </ligand>
</feature>
<feature type="binding site" evidence="1">
    <location>
        <begin position="200"/>
        <end position="202"/>
    </location>
    <ligand>
        <name>FMN</name>
        <dbReference type="ChEBI" id="CHEBI:58210"/>
    </ligand>
</feature>
<feature type="binding site" evidence="1">
    <location>
        <begin position="224"/>
        <end position="225"/>
    </location>
    <ligand>
        <name>FMN</name>
        <dbReference type="ChEBI" id="CHEBI:58210"/>
    </ligand>
</feature>
<feature type="site" description="Interacts with tRNA; defines subfamily-specific binding signature" evidence="1">
    <location>
        <position position="35"/>
    </location>
</feature>
<feature type="site" description="Interacts with tRNA" evidence="1">
    <location>
        <position position="95"/>
    </location>
</feature>
<feature type="site" description="Interacts with tRNA" evidence="1">
    <location>
        <position position="176"/>
    </location>
</feature>
<feature type="site" description="Interacts with tRNA; defines subfamily-specific binding signature" evidence="1">
    <location>
        <position position="272"/>
    </location>
</feature>
<feature type="site" description="Interacts with tRNA; defines subfamily-specific binding signature" evidence="1">
    <location>
        <position position="274"/>
    </location>
</feature>
<feature type="site" description="Interacts with tRNA" evidence="1">
    <location>
        <position position="279"/>
    </location>
</feature>
<feature type="site" description="Interacts with tRNA; defines subfamily-specific binding signature" evidence="1">
    <location>
        <position position="295"/>
    </location>
</feature>
<accession>Q7UC91</accession>
<accession>Q83QX2</accession>
<gene>
    <name evidence="1" type="primary">dusC</name>
    <name type="ordered locus">SF2225</name>
    <name type="ordered locus">S2354</name>
</gene>
<proteinExistence type="inferred from homology"/>
<dbReference type="EC" id="1.3.1.-" evidence="1"/>
<dbReference type="EMBL" id="AE005674">
    <property type="protein sequence ID" value="AAN43747.2"/>
    <property type="molecule type" value="Genomic_DNA"/>
</dbReference>
<dbReference type="EMBL" id="AE014073">
    <property type="protein sequence ID" value="AAP17564.1"/>
    <property type="molecule type" value="Genomic_DNA"/>
</dbReference>
<dbReference type="RefSeq" id="WP_005085206.1">
    <property type="nucleotide sequence ID" value="NZ_WPGW01000017.1"/>
</dbReference>
<dbReference type="SMR" id="Q7UC91"/>
<dbReference type="STRING" id="198214.SF2225"/>
<dbReference type="PaxDb" id="198214-SF2225"/>
<dbReference type="KEGG" id="sfl:SF2225"/>
<dbReference type="KEGG" id="sfx:S2354"/>
<dbReference type="PATRIC" id="fig|198214.7.peg.2666"/>
<dbReference type="HOGENOM" id="CLU_013299_0_4_6"/>
<dbReference type="Proteomes" id="UP000001006">
    <property type="component" value="Chromosome"/>
</dbReference>
<dbReference type="Proteomes" id="UP000002673">
    <property type="component" value="Chromosome"/>
</dbReference>
<dbReference type="GO" id="GO:0050660">
    <property type="term" value="F:flavin adenine dinucleotide binding"/>
    <property type="evidence" value="ECO:0007669"/>
    <property type="project" value="InterPro"/>
</dbReference>
<dbReference type="GO" id="GO:0010181">
    <property type="term" value="F:FMN binding"/>
    <property type="evidence" value="ECO:0007669"/>
    <property type="project" value="UniProtKB-UniRule"/>
</dbReference>
<dbReference type="GO" id="GO:0000049">
    <property type="term" value="F:tRNA binding"/>
    <property type="evidence" value="ECO:0007669"/>
    <property type="project" value="UniProtKB-UniRule"/>
</dbReference>
<dbReference type="GO" id="GO:0102262">
    <property type="term" value="F:tRNA-dihydrouridine16 synthase activity"/>
    <property type="evidence" value="ECO:0007669"/>
    <property type="project" value="RHEA"/>
</dbReference>
<dbReference type="CDD" id="cd02801">
    <property type="entry name" value="DUS_like_FMN"/>
    <property type="match status" value="1"/>
</dbReference>
<dbReference type="FunFam" id="3.20.20.70:FF:000119">
    <property type="entry name" value="tRNA-dihydrouridine(16) synthase"/>
    <property type="match status" value="1"/>
</dbReference>
<dbReference type="Gene3D" id="3.20.20.70">
    <property type="entry name" value="Aldolase class I"/>
    <property type="match status" value="1"/>
</dbReference>
<dbReference type="Gene3D" id="1.20.225.30">
    <property type="entry name" value="Dihydrouridine synthase, C-terminal recognition domain"/>
    <property type="match status" value="1"/>
</dbReference>
<dbReference type="HAMAP" id="MF_02043">
    <property type="entry name" value="DusC_subfam"/>
    <property type="match status" value="1"/>
</dbReference>
<dbReference type="InterPro" id="IPR013785">
    <property type="entry name" value="Aldolase_TIM"/>
</dbReference>
<dbReference type="InterPro" id="IPR035587">
    <property type="entry name" value="DUS-like_FMN-bd"/>
</dbReference>
<dbReference type="InterPro" id="IPR001269">
    <property type="entry name" value="DUS_fam"/>
</dbReference>
<dbReference type="InterPro" id="IPR032886">
    <property type="entry name" value="DusC"/>
</dbReference>
<dbReference type="InterPro" id="IPR042270">
    <property type="entry name" value="DusC_C"/>
</dbReference>
<dbReference type="InterPro" id="IPR018517">
    <property type="entry name" value="tRNA_hU_synthase_CS"/>
</dbReference>
<dbReference type="NCBIfam" id="NF007838">
    <property type="entry name" value="PRK10550.1"/>
    <property type="match status" value="1"/>
</dbReference>
<dbReference type="PANTHER" id="PTHR11082">
    <property type="entry name" value="TRNA-DIHYDROURIDINE SYNTHASE"/>
    <property type="match status" value="1"/>
</dbReference>
<dbReference type="PANTHER" id="PTHR11082:SF26">
    <property type="entry name" value="TRNA-DIHYDROURIDINE(16) SYNTHASE"/>
    <property type="match status" value="1"/>
</dbReference>
<dbReference type="Pfam" id="PF01207">
    <property type="entry name" value="Dus"/>
    <property type="match status" value="1"/>
</dbReference>
<dbReference type="PIRSF" id="PIRSF006621">
    <property type="entry name" value="Dus"/>
    <property type="match status" value="1"/>
</dbReference>
<dbReference type="SUPFAM" id="SSF51395">
    <property type="entry name" value="FMN-linked oxidoreductases"/>
    <property type="match status" value="1"/>
</dbReference>
<dbReference type="PROSITE" id="PS01136">
    <property type="entry name" value="UPF0034"/>
    <property type="match status" value="1"/>
</dbReference>
<comment type="function">
    <text evidence="1">Catalyzes the synthesis of 5,6-dihydrouridine (D), a modified base found in the D-loop of most tRNAs, via the reduction of the C5-C6 double bond in target uridines. Specifically modifies U16 in tRNAs.</text>
</comment>
<comment type="catalytic activity">
    <reaction evidence="1">
        <text>5,6-dihydrouridine(16) in tRNA + NADP(+) = uridine(16) in tRNA + NADPH + H(+)</text>
        <dbReference type="Rhea" id="RHEA:53376"/>
        <dbReference type="Rhea" id="RHEA-COMP:13543"/>
        <dbReference type="Rhea" id="RHEA-COMP:13544"/>
        <dbReference type="ChEBI" id="CHEBI:15378"/>
        <dbReference type="ChEBI" id="CHEBI:57783"/>
        <dbReference type="ChEBI" id="CHEBI:58349"/>
        <dbReference type="ChEBI" id="CHEBI:65315"/>
        <dbReference type="ChEBI" id="CHEBI:74443"/>
    </reaction>
</comment>
<comment type="catalytic activity">
    <reaction evidence="1">
        <text>5,6-dihydrouridine(16) in tRNA + NAD(+) = uridine(16) in tRNA + NADH + H(+)</text>
        <dbReference type="Rhea" id="RHEA:53380"/>
        <dbReference type="Rhea" id="RHEA-COMP:13543"/>
        <dbReference type="Rhea" id="RHEA-COMP:13544"/>
        <dbReference type="ChEBI" id="CHEBI:15378"/>
        <dbReference type="ChEBI" id="CHEBI:57540"/>
        <dbReference type="ChEBI" id="CHEBI:57945"/>
        <dbReference type="ChEBI" id="CHEBI:65315"/>
        <dbReference type="ChEBI" id="CHEBI:74443"/>
    </reaction>
</comment>
<comment type="cofactor">
    <cofactor evidence="1">
        <name>FMN</name>
        <dbReference type="ChEBI" id="CHEBI:58210"/>
    </cofactor>
</comment>
<comment type="similarity">
    <text evidence="1">Belongs to the Dus family. DusC subfamily.</text>
</comment>
<evidence type="ECO:0000255" key="1">
    <source>
        <dbReference type="HAMAP-Rule" id="MF_02043"/>
    </source>
</evidence>
<keyword id="KW-0285">Flavoprotein</keyword>
<keyword id="KW-0288">FMN</keyword>
<keyword id="KW-0521">NADP</keyword>
<keyword id="KW-0560">Oxidoreductase</keyword>
<keyword id="KW-1185">Reference proteome</keyword>
<keyword id="KW-0694">RNA-binding</keyword>
<keyword id="KW-0819">tRNA processing</keyword>
<keyword id="KW-0820">tRNA-binding</keyword>
<reference key="1">
    <citation type="journal article" date="2002" name="Nucleic Acids Res.">
        <title>Genome sequence of Shigella flexneri 2a: insights into pathogenicity through comparison with genomes of Escherichia coli K12 and O157.</title>
        <authorList>
            <person name="Jin Q."/>
            <person name="Yuan Z."/>
            <person name="Xu J."/>
            <person name="Wang Y."/>
            <person name="Shen Y."/>
            <person name="Lu W."/>
            <person name="Wang J."/>
            <person name="Liu H."/>
            <person name="Yang J."/>
            <person name="Yang F."/>
            <person name="Zhang X."/>
            <person name="Zhang J."/>
            <person name="Yang G."/>
            <person name="Wu H."/>
            <person name="Qu D."/>
            <person name="Dong J."/>
            <person name="Sun L."/>
            <person name="Xue Y."/>
            <person name="Zhao A."/>
            <person name="Gao Y."/>
            <person name="Zhu J."/>
            <person name="Kan B."/>
            <person name="Ding K."/>
            <person name="Chen S."/>
            <person name="Cheng H."/>
            <person name="Yao Z."/>
            <person name="He B."/>
            <person name="Chen R."/>
            <person name="Ma D."/>
            <person name="Qiang B."/>
            <person name="Wen Y."/>
            <person name="Hou Y."/>
            <person name="Yu J."/>
        </authorList>
    </citation>
    <scope>NUCLEOTIDE SEQUENCE [LARGE SCALE GENOMIC DNA]</scope>
    <source>
        <strain>301 / Serotype 2a</strain>
    </source>
</reference>
<reference key="2">
    <citation type="journal article" date="2003" name="Infect. Immun.">
        <title>Complete genome sequence and comparative genomics of Shigella flexneri serotype 2a strain 2457T.</title>
        <authorList>
            <person name="Wei J."/>
            <person name="Goldberg M.B."/>
            <person name="Burland V."/>
            <person name="Venkatesan M.M."/>
            <person name="Deng W."/>
            <person name="Fournier G."/>
            <person name="Mayhew G.F."/>
            <person name="Plunkett G. III"/>
            <person name="Rose D.J."/>
            <person name="Darling A."/>
            <person name="Mau B."/>
            <person name="Perna N.T."/>
            <person name="Payne S.M."/>
            <person name="Runyen-Janecky L.J."/>
            <person name="Zhou S."/>
            <person name="Schwartz D.C."/>
            <person name="Blattner F.R."/>
        </authorList>
    </citation>
    <scope>NUCLEOTIDE SEQUENCE [LARGE SCALE GENOMIC DNA]</scope>
    <source>
        <strain>ATCC 700930 / 2457T / Serotype 2a</strain>
    </source>
</reference>